<accession>Q9M1D8</accession>
<proteinExistence type="evidence at transcript level"/>
<comment type="similarity">
    <text evidence="1">Belongs to the PPR family. P subfamily.</text>
</comment>
<comment type="online information" name="Pentatricopeptide repeat proteins">
    <link uri="https://ppr.plantenergy.uwa.edu.au"/>
</comment>
<sequence>MNLALVLGTNVVRKAYRFLFISRKFCNGNFGGNEIDNGFPDLDCGFDEDSNISELRSIDREVISVRSRFLESANHSASRVLVTLQLDESGFNSKSVLDELNVRVSGLLVREVLVGILRNLSYDNKARCAKLAYRFFLWSGEQECFRHTVNSYHLLMKIFAECGEYKAMWRLVDEMVQDGFPTTARTFNLLICSCGEAGLAKQAVVQFMKSKTFNYRPFKHSYNAILNSLLGVKQYKLIEWVYKQMLEDGFSPDVLTYNILLWTNYRLGKMDRFDRLFDEMARDGFSPDSYTYNILLHILGKGNKPLAALTTLNHMKEVGIDPSVLHYTTLIDGLSRAGNLEACKYFLDEMVKAGCRPDVVCYTVMITGYVVSGELDKAKEMFREMTVKGQLPNVFTYNSMIRGLCMAGEFREACWLLKEMESRGCNPNFVVYSTLVSYLRKAGKLSEARKVIREMVKKGHYVHLVPKMMKYRR</sequence>
<keyword id="KW-1185">Reference proteome</keyword>
<keyword id="KW-0677">Repeat</keyword>
<organism>
    <name type="scientific">Arabidopsis thaliana</name>
    <name type="common">Mouse-ear cress</name>
    <dbReference type="NCBI Taxonomy" id="3702"/>
    <lineage>
        <taxon>Eukaryota</taxon>
        <taxon>Viridiplantae</taxon>
        <taxon>Streptophyta</taxon>
        <taxon>Embryophyta</taxon>
        <taxon>Tracheophyta</taxon>
        <taxon>Spermatophyta</taxon>
        <taxon>Magnoliopsida</taxon>
        <taxon>eudicotyledons</taxon>
        <taxon>Gunneridae</taxon>
        <taxon>Pentapetalae</taxon>
        <taxon>rosids</taxon>
        <taxon>malvids</taxon>
        <taxon>Brassicales</taxon>
        <taxon>Brassicaceae</taxon>
        <taxon>Camelineae</taxon>
        <taxon>Arabidopsis</taxon>
    </lineage>
</organism>
<dbReference type="EMBL" id="AL138658">
    <property type="protein sequence ID" value="CAB75920.1"/>
    <property type="molecule type" value="Genomic_DNA"/>
</dbReference>
<dbReference type="EMBL" id="CP002686">
    <property type="protein sequence ID" value="AEE80006.1"/>
    <property type="molecule type" value="Genomic_DNA"/>
</dbReference>
<dbReference type="EMBL" id="CP002686">
    <property type="protein sequence ID" value="ANM64964.1"/>
    <property type="molecule type" value="Genomic_DNA"/>
</dbReference>
<dbReference type="PIR" id="T47829">
    <property type="entry name" value="T47829"/>
</dbReference>
<dbReference type="RefSeq" id="NP_001326964.1">
    <property type="nucleotide sequence ID" value="NM_001340016.1"/>
</dbReference>
<dbReference type="RefSeq" id="NP_191564.1">
    <property type="nucleotide sequence ID" value="NM_115868.3"/>
</dbReference>
<dbReference type="SMR" id="Q9M1D8"/>
<dbReference type="FunCoup" id="Q9M1D8">
    <property type="interactions" value="1429"/>
</dbReference>
<dbReference type="PaxDb" id="3702-AT3G60050.1"/>
<dbReference type="ProteomicsDB" id="248964"/>
<dbReference type="EnsemblPlants" id="AT3G60050.1">
    <property type="protein sequence ID" value="AT3G60050.1"/>
    <property type="gene ID" value="AT3G60050"/>
</dbReference>
<dbReference type="EnsemblPlants" id="AT3G60050.2">
    <property type="protein sequence ID" value="AT3G60050.2"/>
    <property type="gene ID" value="AT3G60050"/>
</dbReference>
<dbReference type="GeneID" id="825175"/>
<dbReference type="Gramene" id="AT3G60050.1">
    <property type="protein sequence ID" value="AT3G60050.1"/>
    <property type="gene ID" value="AT3G60050"/>
</dbReference>
<dbReference type="Gramene" id="AT3G60050.2">
    <property type="protein sequence ID" value="AT3G60050.2"/>
    <property type="gene ID" value="AT3G60050"/>
</dbReference>
<dbReference type="KEGG" id="ath:AT3G60050"/>
<dbReference type="Araport" id="AT3G60050"/>
<dbReference type="TAIR" id="AT3G60050"/>
<dbReference type="eggNOG" id="KOG4197">
    <property type="taxonomic scope" value="Eukaryota"/>
</dbReference>
<dbReference type="HOGENOM" id="CLU_002706_49_25_1"/>
<dbReference type="InParanoid" id="Q9M1D8"/>
<dbReference type="OMA" id="YFLDEMV"/>
<dbReference type="PhylomeDB" id="Q9M1D8"/>
<dbReference type="PRO" id="PR:Q9M1D8"/>
<dbReference type="Proteomes" id="UP000006548">
    <property type="component" value="Chromosome 3"/>
</dbReference>
<dbReference type="ExpressionAtlas" id="Q9M1D8">
    <property type="expression patterns" value="baseline and differential"/>
</dbReference>
<dbReference type="Gene3D" id="1.25.40.10">
    <property type="entry name" value="Tetratricopeptide repeat domain"/>
    <property type="match status" value="3"/>
</dbReference>
<dbReference type="InterPro" id="IPR051240">
    <property type="entry name" value="Mito_RNA-Proc/Resp"/>
</dbReference>
<dbReference type="InterPro" id="IPR002885">
    <property type="entry name" value="Pentatricopeptide_rpt"/>
</dbReference>
<dbReference type="InterPro" id="IPR011990">
    <property type="entry name" value="TPR-like_helical_dom_sf"/>
</dbReference>
<dbReference type="NCBIfam" id="TIGR00756">
    <property type="entry name" value="PPR"/>
    <property type="match status" value="7"/>
</dbReference>
<dbReference type="PANTHER" id="PTHR47933">
    <property type="entry name" value="PENTATRICOPEPTIDE REPEAT-CONTAINING PROTEIN 1, MITOCHONDRIAL"/>
    <property type="match status" value="1"/>
</dbReference>
<dbReference type="PANTHER" id="PTHR47933:SF11">
    <property type="entry name" value="PENTATRICOPEPTIDE REPEAT-CONTAINING PROTEIN 2"/>
    <property type="match status" value="1"/>
</dbReference>
<dbReference type="Pfam" id="PF12854">
    <property type="entry name" value="PPR_1"/>
    <property type="match status" value="1"/>
</dbReference>
<dbReference type="Pfam" id="PF13041">
    <property type="entry name" value="PPR_2"/>
    <property type="match status" value="2"/>
</dbReference>
<dbReference type="Pfam" id="PF13812">
    <property type="entry name" value="PPR_3"/>
    <property type="match status" value="2"/>
</dbReference>
<dbReference type="PROSITE" id="PS51375">
    <property type="entry name" value="PPR"/>
    <property type="match status" value="9"/>
</dbReference>
<protein>
    <recommendedName>
        <fullName>Pentatricopeptide repeat-containing protein At3g60050</fullName>
    </recommendedName>
</protein>
<feature type="chain" id="PRO_0000356147" description="Pentatricopeptide repeat-containing protein At3g60050">
    <location>
        <begin position="1"/>
        <end position="473"/>
    </location>
</feature>
<feature type="repeat" description="PPR 1">
    <location>
        <begin position="148"/>
        <end position="182"/>
    </location>
</feature>
<feature type="repeat" description="PPR 2">
    <location>
        <begin position="183"/>
        <end position="217"/>
    </location>
</feature>
<feature type="repeat" description="PPR 3">
    <location>
        <begin position="218"/>
        <end position="252"/>
    </location>
</feature>
<feature type="repeat" description="PPR 4">
    <location>
        <begin position="253"/>
        <end position="287"/>
    </location>
</feature>
<feature type="repeat" description="PPR 5">
    <location>
        <begin position="288"/>
        <end position="322"/>
    </location>
</feature>
<feature type="repeat" description="PPR 6">
    <location>
        <begin position="323"/>
        <end position="357"/>
    </location>
</feature>
<feature type="repeat" description="PPR 7">
    <location>
        <begin position="358"/>
        <end position="392"/>
    </location>
</feature>
<feature type="repeat" description="PPR 8">
    <location>
        <begin position="393"/>
        <end position="427"/>
    </location>
</feature>
<feature type="repeat" description="PPR 9">
    <location>
        <begin position="428"/>
        <end position="462"/>
    </location>
</feature>
<gene>
    <name type="ordered locus">At3g60050</name>
    <name type="ORF">T2O9.30</name>
</gene>
<name>PP288_ARATH</name>
<reference key="1">
    <citation type="journal article" date="2000" name="Nature">
        <title>Sequence and analysis of chromosome 3 of the plant Arabidopsis thaliana.</title>
        <authorList>
            <person name="Salanoubat M."/>
            <person name="Lemcke K."/>
            <person name="Rieger M."/>
            <person name="Ansorge W."/>
            <person name="Unseld M."/>
            <person name="Fartmann B."/>
            <person name="Valle G."/>
            <person name="Bloecker H."/>
            <person name="Perez-Alonso M."/>
            <person name="Obermaier B."/>
            <person name="Delseny M."/>
            <person name="Boutry M."/>
            <person name="Grivell L.A."/>
            <person name="Mache R."/>
            <person name="Puigdomenech P."/>
            <person name="De Simone V."/>
            <person name="Choisne N."/>
            <person name="Artiguenave F."/>
            <person name="Robert C."/>
            <person name="Brottier P."/>
            <person name="Wincker P."/>
            <person name="Cattolico L."/>
            <person name="Weissenbach J."/>
            <person name="Saurin W."/>
            <person name="Quetier F."/>
            <person name="Schaefer M."/>
            <person name="Mueller-Auer S."/>
            <person name="Gabel C."/>
            <person name="Fuchs M."/>
            <person name="Benes V."/>
            <person name="Wurmbach E."/>
            <person name="Drzonek H."/>
            <person name="Erfle H."/>
            <person name="Jordan N."/>
            <person name="Bangert S."/>
            <person name="Wiedelmann R."/>
            <person name="Kranz H."/>
            <person name="Voss H."/>
            <person name="Holland R."/>
            <person name="Brandt P."/>
            <person name="Nyakatura G."/>
            <person name="Vezzi A."/>
            <person name="D'Angelo M."/>
            <person name="Pallavicini A."/>
            <person name="Toppo S."/>
            <person name="Simionati B."/>
            <person name="Conrad A."/>
            <person name="Hornischer K."/>
            <person name="Kauer G."/>
            <person name="Loehnert T.-H."/>
            <person name="Nordsiek G."/>
            <person name="Reichelt J."/>
            <person name="Scharfe M."/>
            <person name="Schoen O."/>
            <person name="Bargues M."/>
            <person name="Terol J."/>
            <person name="Climent J."/>
            <person name="Navarro P."/>
            <person name="Collado C."/>
            <person name="Perez-Perez A."/>
            <person name="Ottenwaelder B."/>
            <person name="Duchemin D."/>
            <person name="Cooke R."/>
            <person name="Laudie M."/>
            <person name="Berger-Llauro C."/>
            <person name="Purnelle B."/>
            <person name="Masuy D."/>
            <person name="de Haan M."/>
            <person name="Maarse A.C."/>
            <person name="Alcaraz J.-P."/>
            <person name="Cottet A."/>
            <person name="Casacuberta E."/>
            <person name="Monfort A."/>
            <person name="Argiriou A."/>
            <person name="Flores M."/>
            <person name="Liguori R."/>
            <person name="Vitale D."/>
            <person name="Mannhaupt G."/>
            <person name="Haase D."/>
            <person name="Schoof H."/>
            <person name="Rudd S."/>
            <person name="Zaccaria P."/>
            <person name="Mewes H.-W."/>
            <person name="Mayer K.F.X."/>
            <person name="Kaul S."/>
            <person name="Town C.D."/>
            <person name="Koo H.L."/>
            <person name="Tallon L.J."/>
            <person name="Jenkins J."/>
            <person name="Rooney T."/>
            <person name="Rizzo M."/>
            <person name="Walts A."/>
            <person name="Utterback T."/>
            <person name="Fujii C.Y."/>
            <person name="Shea T.P."/>
            <person name="Creasy T.H."/>
            <person name="Haas B."/>
            <person name="Maiti R."/>
            <person name="Wu D."/>
            <person name="Peterson J."/>
            <person name="Van Aken S."/>
            <person name="Pai G."/>
            <person name="Militscher J."/>
            <person name="Sellers P."/>
            <person name="Gill J.E."/>
            <person name="Feldblyum T.V."/>
            <person name="Preuss D."/>
            <person name="Lin X."/>
            <person name="Nierman W.C."/>
            <person name="Salzberg S.L."/>
            <person name="White O."/>
            <person name="Venter J.C."/>
            <person name="Fraser C.M."/>
            <person name="Kaneko T."/>
            <person name="Nakamura Y."/>
            <person name="Sato S."/>
            <person name="Kato T."/>
            <person name="Asamizu E."/>
            <person name="Sasamoto S."/>
            <person name="Kimura T."/>
            <person name="Idesawa K."/>
            <person name="Kawashima K."/>
            <person name="Kishida Y."/>
            <person name="Kiyokawa C."/>
            <person name="Kohara M."/>
            <person name="Matsumoto M."/>
            <person name="Matsuno A."/>
            <person name="Muraki A."/>
            <person name="Nakayama S."/>
            <person name="Nakazaki N."/>
            <person name="Shinpo S."/>
            <person name="Takeuchi C."/>
            <person name="Wada T."/>
            <person name="Watanabe A."/>
            <person name="Yamada M."/>
            <person name="Yasuda M."/>
            <person name="Tabata S."/>
        </authorList>
    </citation>
    <scope>NUCLEOTIDE SEQUENCE [LARGE SCALE GENOMIC DNA]</scope>
    <source>
        <strain>cv. Columbia</strain>
    </source>
</reference>
<reference key="2">
    <citation type="journal article" date="2017" name="Plant J.">
        <title>Araport11: a complete reannotation of the Arabidopsis thaliana reference genome.</title>
        <authorList>
            <person name="Cheng C.Y."/>
            <person name="Krishnakumar V."/>
            <person name="Chan A.P."/>
            <person name="Thibaud-Nissen F."/>
            <person name="Schobel S."/>
            <person name="Town C.D."/>
        </authorList>
    </citation>
    <scope>GENOME REANNOTATION</scope>
    <source>
        <strain>cv. Columbia</strain>
    </source>
</reference>
<reference key="3">
    <citation type="journal article" date="2004" name="Plant Cell">
        <title>Genome-wide analysis of Arabidopsis pentatricopeptide repeat proteins reveals their essential role in organelle biogenesis.</title>
        <authorList>
            <person name="Lurin C."/>
            <person name="Andres C."/>
            <person name="Aubourg S."/>
            <person name="Bellaoui M."/>
            <person name="Bitton F."/>
            <person name="Bruyere C."/>
            <person name="Caboche M."/>
            <person name="Debast C."/>
            <person name="Gualberto J."/>
            <person name="Hoffmann B."/>
            <person name="Lecharny A."/>
            <person name="Le Ret M."/>
            <person name="Martin-Magniette M.-L."/>
            <person name="Mireau H."/>
            <person name="Peeters N."/>
            <person name="Renou J.-P."/>
            <person name="Szurek B."/>
            <person name="Taconnat L."/>
            <person name="Small I."/>
        </authorList>
    </citation>
    <scope>GENE FAMILY</scope>
</reference>
<evidence type="ECO:0000305" key="1"/>